<sequence length="158" mass="15598">MDFRQISPTTCTTPASSSSAAPPTPASSSSAAPPTPASSSSAAPPTPANCSTAAPPTPANCSTAAPPTPASSGSAAPPTPAPDHWWMEAPHHWLPGLLARCGSRQLPSSVGLACFGTAAVPRKPVNWACQGSHGELEASQVGSGKAGPCTPHPSLLGF</sequence>
<accession>Q8N377</accession>
<dbReference type="EMBL" id="BC027847">
    <property type="protein sequence ID" value="AAH27847.1"/>
    <property type="status" value="ALT_SEQ"/>
    <property type="molecule type" value="mRNA"/>
</dbReference>
<dbReference type="EMBL" id="BC047942">
    <property type="status" value="NOT_ANNOTATED_CDS"/>
    <property type="molecule type" value="mRNA"/>
</dbReference>
<dbReference type="GlyGen" id="Q8N377">
    <property type="glycosylation" value="6 sites"/>
</dbReference>
<dbReference type="BioMuta" id="-"/>
<dbReference type="neXtProt" id="NX_Q8N377"/>
<dbReference type="InParanoid" id="Q8N377"/>
<dbReference type="PAN-GO" id="Q8N377">
    <property type="GO annotations" value="0 GO annotations based on evolutionary models"/>
</dbReference>
<dbReference type="Pharos" id="Q8N377">
    <property type="development level" value="Tdark"/>
</dbReference>
<dbReference type="Proteomes" id="UP000005640">
    <property type="component" value="Unplaced"/>
</dbReference>
<dbReference type="RNAct" id="Q8N377">
    <property type="molecule type" value="protein"/>
</dbReference>
<evidence type="ECO:0000256" key="1">
    <source>
        <dbReference type="SAM" id="MobiDB-lite"/>
    </source>
</evidence>
<evidence type="ECO:0000305" key="2"/>
<proteinExistence type="uncertain"/>
<keyword id="KW-1185">Reference proteome</keyword>
<organism>
    <name type="scientific">Homo sapiens</name>
    <name type="common">Human</name>
    <dbReference type="NCBI Taxonomy" id="9606"/>
    <lineage>
        <taxon>Eukaryota</taxon>
        <taxon>Metazoa</taxon>
        <taxon>Chordata</taxon>
        <taxon>Craniata</taxon>
        <taxon>Vertebrata</taxon>
        <taxon>Euteleostomi</taxon>
        <taxon>Mammalia</taxon>
        <taxon>Eutheria</taxon>
        <taxon>Euarchontoglires</taxon>
        <taxon>Primates</taxon>
        <taxon>Haplorrhini</taxon>
        <taxon>Catarrhini</taxon>
        <taxon>Hominidae</taxon>
        <taxon>Homo</taxon>
    </lineage>
</organism>
<name>YJ004_HUMAN</name>
<feature type="chain" id="PRO_0000321524" description="Putative uncharacterized protein LOC387726">
    <location>
        <begin position="1"/>
        <end position="158"/>
    </location>
</feature>
<feature type="region of interest" description="Disordered" evidence="1">
    <location>
        <begin position="1"/>
        <end position="86"/>
    </location>
</feature>
<feature type="region of interest" description="Disordered" evidence="1">
    <location>
        <begin position="138"/>
        <end position="158"/>
    </location>
</feature>
<feature type="compositionally biased region" description="Low complexity" evidence="1">
    <location>
        <begin position="7"/>
        <end position="76"/>
    </location>
</feature>
<comment type="caution">
    <text evidence="2">Could be the product of a pseudogene.</text>
</comment>
<comment type="sequence caution" evidence="2">
    <conflict type="erroneous translation">
        <sequence resource="EMBL-CDS" id="AAH27847"/>
    </conflict>
    <text>Wrong choice of frame.</text>
</comment>
<reference key="1">
    <citation type="journal article" date="2004" name="Genome Res.">
        <title>The status, quality, and expansion of the NIH full-length cDNA project: the Mammalian Gene Collection (MGC).</title>
        <authorList>
            <consortium name="The MGC Project Team"/>
        </authorList>
    </citation>
    <scope>NUCLEOTIDE SEQUENCE [LARGE SCALE MRNA]</scope>
    <source>
        <tissue>Brain</tissue>
    </source>
</reference>
<protein>
    <recommendedName>
        <fullName>Putative uncharacterized protein LOC387726</fullName>
    </recommendedName>
</protein>